<keyword id="KW-0067">ATP-binding</keyword>
<keyword id="KW-0131">Cell cycle</keyword>
<keyword id="KW-0156">Chromatin regulator</keyword>
<keyword id="KW-0158">Chromosome</keyword>
<keyword id="KW-0217">Developmental protein</keyword>
<keyword id="KW-0227">DNA damage</keyword>
<keyword id="KW-0418">Kinase</keyword>
<keyword id="KW-0547">Nucleotide-binding</keyword>
<keyword id="KW-0539">Nucleus</keyword>
<keyword id="KW-1185">Reference proteome</keyword>
<keyword id="KW-0723">Serine/threonine-protein kinase</keyword>
<keyword id="KW-0779">Telomere</keyword>
<keyword id="KW-0808">Transferase</keyword>
<organism>
    <name type="scientific">Drosophila melanogaster</name>
    <name type="common">Fruit fly</name>
    <dbReference type="NCBI Taxonomy" id="7227"/>
    <lineage>
        <taxon>Eukaryota</taxon>
        <taxon>Metazoa</taxon>
        <taxon>Ecdysozoa</taxon>
        <taxon>Arthropoda</taxon>
        <taxon>Hexapoda</taxon>
        <taxon>Insecta</taxon>
        <taxon>Pterygota</taxon>
        <taxon>Neoptera</taxon>
        <taxon>Endopterygota</taxon>
        <taxon>Diptera</taxon>
        <taxon>Brachycera</taxon>
        <taxon>Muscomorpha</taxon>
        <taxon>Ephydroidea</taxon>
        <taxon>Drosophilidae</taxon>
        <taxon>Drosophila</taxon>
        <taxon>Sophophora</taxon>
    </lineage>
</organism>
<name>ATM_DROME</name>
<proteinExistence type="evidence at transcript level"/>
<sequence>MSALLNEIQRILGDLQSGKAASRNKGIQQLDEKLSSCREDLDKLFLSKTSDISWTTIFEASKEALFKQAGNLEDVNEKVFKTLAGKNYLYDNVLEKITQFNLEAGSQTSGNGHFLAKTSIFSAFEDGIKMRVVVKYFGDRILSLLEKGIYSSVSYVRDLKINEYSRILSYLFELNVDMDEVLRTRILKCITRTVSLAKDRVQLHVDLVEYLPELSSFALSAFGARKTEIVRVYLIFASELAVNYNHQLNVHMQEILPKLCEYHDEDAFRDDTRNLFFQCVSKSLHSMYLKMDMCDFNTLGVPVHEKWPQTLLRLKTIVNVEIRKNSWARCKNALLSNNKFSDPFIKMSALAMYIVLWHLETKKADENGEGDAPKKIPKPADKMETIFSLIDKKENTFNDVWLAIFTEILQLSSVILNVANYQMALTTVAEIMQMYGNAKNLRNLRLCLAHLLTKEQELLHSKSIREDFLGELWSQMANQLISETTTNSEEIKEKQLVLQMLIRHNKLNQKLSSTLLNNIISNEMLKRNECLATIREIFIHADKCGQDKASADLEPIIAWAYGSADRFIAAQMIHNIDSIDAQLQADTFAISIINFLDVQQLRQISQSEHIVPSTERNLLAYKYNEQLICFDKDYATPFESITHIQSETKNCLIQSNYDCLMRGLNFEIAKENKPAAIIKNLNSLLKLICTMERLLHYKVFDADTYTGCPLIKRIGLYLSHIEFQLKANGAEILDKSDLPEILRLEIYVLDVFRTNLVLLDYLERQPIEMLVEFVGAALKLHSMQRERSVDADHGTITRLCLNILAGLCAYNSHRDEAFEHIVKVTMRWHPQDVLIVTKMLCSCQTISEASSSWLVSKLKTLFQQHHQDAELMDKVVQHMPTIFYFVRHKENHLDDMLMALNSLLRIAIKKSYTSNLTAKIVRCVGLIAQRCPDIYLLENFAVICKSTAKFITMPTLEVRFATLFTFTILLESNCVTSDAIGHSRTHWDFCQELYESIEFKKLTYNNEDAIQNSNALIVQMLIAIFLRSSFHQEIALKELLHHCALRRLTEREFISLQSMSSCHRQTVRDLIRPFAAILLHHWSSKRWPISKFPYFLCYSTKSEFRKTHASEIMAYTFLYGKTEDIERCSKSISEELALPILASFLLIKNSSCSESEGQNFKEHLQLLSENLSYSQLNATDVDLDLDILCYVISMLHDPQEMMRLFGSLAICNRTASWYSLSGESLFKCLNFHIDPEMRPSMDSRIQSMTTLQTKHSRVLVDIFGRLKTNCYSASFSSQALHDFFLYCEVADAVYDAARKNETIVTQCSFFVRDIWFFVVRLLIHTKFIRVQMAALTFLELLLNKHNFRLDDYQNHFGDIAKLLSNFQLCCEAKEVREKTMSIVMYILESKKGHINLNSFLEETTDCEFLKPLREDCKSSQPNIDRADVANYLRSFLLSPTPERLRDLRTYIAEHKDKVQEHEKLLFGVINKLIQMTRDAHNKTTSIDSLKCLAQIGPLKISTVSYYFQTDFEAFEKSNGEPMEAFLGVVCHSLDTSLFQFDPKTHEGLVSVAIQVVNSKPGSNIMERYKNLRIFADKSTASTFLHSNKQIRRIDWLSILKATKSLSYEPWMCAFVSKVFQMCGWLGFDKLAATSFAFAKTCLLPFIKLLLENSLEHVESLSQMLDYFFEGFTSSTAPNSQEIFRNKRAIKKFLHICEYIRIFNNWTIPINLSNVVMASNHCQAYFLSIMYLELWACSESPKSKADFLDNECFQDGAKKAYESIGCLDAIPGFVNPMRSRLDFLGHGSNLSTILLESDHLDRASGQLCIDIMKGNGLWSFAKLQQHQNIEPDYEIFWRLGQWDSLTDPKHQQNQTVVRTSLDLEQEFKRHHFVALRSIGQREEENSLSAIEQAYSCVRDILMEISVECLQSVYKYLTWLCSLQQAEDFCQIQFGTQLDPASTTKIFRKWQTELELKYGNFSCKEYVIAHQIALLKLAGTRASRRMSEFYQKDPISTYLMKGIEECKSAGKLNLAAKYTATLRELPNIRESIKISVLLEDAEINLKMGNQQIAKAILDYVTNNNEFVYCVQRVPALRMQGEFLLDCNAETLSWVQSHKFNNSLKLIDDFVQHRQTLSEKYRDIFDWHQLDAYASKQRTAAYATIAKYADREYQQLHDYRHSQEYQTLKDIIEQNRQTAEKVTQRENQDRRVISVQMKRYASLDEQQLNQIEEKLTEYLRLALTNYMAYCRLDSGFSSAAIYRIISLWFTNATSKQCQECIKDEILTVPSYKFICAANQLTARLNSKNTSLLKGLTDLLVQCGKDHPYHTFYQLYPLVFAHLDGENSNTERSGIARKIIAMICEKNGTAGECSKQLESLLPALITFANEGKTNDNRPVSDSVRNKQFDKVRRWRNLNAVHCPTLELPVMPSKEYSIISVVKWTNETTQCGGLNAPVKIMCVCSDGKIRAQLVKGKDDLRQDAVMQQVFGIVNELLNQDSEFIERKLKLRTYKVTPLSMRSGILEWCTNSVPVGHYLVVEGKGGAHARYRPNDWNNNKCRKLSSDHLKSPKETRYAIYKKICENIKPVFHYFLLEKFPIPGVWFERRLAYTNSVATTSMVGYVLGLGDRHTQNILVDQQTAEVIHIDFGIAFEQGKIQTTPETVPFRLTRDFVAPMGICGTKGVFAKSCEATMHILRRYKSVFTTILEVLLYDPLFIWGVLKKKQSPQQSGEESVNLVAQRALLLVQNKLDGREAGTMGDSNVEAQVERLINEATLPSNLCMLFPGWDPHL</sequence>
<feature type="chain" id="PRO_0000225627" description="Serine/threonine-protein kinase ATM">
    <location>
        <begin position="1"/>
        <end position="2767"/>
    </location>
</feature>
<feature type="domain" description="FAT" evidence="2">
    <location>
        <begin position="1713"/>
        <end position="2317"/>
    </location>
</feature>
<feature type="domain" description="PI3K/PI4K catalytic" evidence="1">
    <location>
        <begin position="2419"/>
        <end position="2734"/>
    </location>
</feature>
<feature type="domain" description="FATC" evidence="2 3">
    <location>
        <begin position="2735"/>
        <end position="2767"/>
    </location>
</feature>
<feature type="region of interest" description="G-loop" evidence="1">
    <location>
        <begin position="2425"/>
        <end position="2431"/>
    </location>
</feature>
<feature type="region of interest" description="Catalytic loop" evidence="1">
    <location>
        <begin position="2601"/>
        <end position="2609"/>
    </location>
</feature>
<feature type="region of interest" description="Activation loop" evidence="1">
    <location>
        <begin position="2621"/>
        <end position="2645"/>
    </location>
</feature>
<feature type="sequence conflict" description="In Ref. 4; AAM29197." evidence="12" ref="4">
    <original>T</original>
    <variation>P</variation>
    <location>
        <position position="2733"/>
    </location>
</feature>
<evidence type="ECO:0000255" key="1">
    <source>
        <dbReference type="PROSITE-ProRule" id="PRU00269"/>
    </source>
</evidence>
<evidence type="ECO:0000255" key="2">
    <source>
        <dbReference type="PROSITE-ProRule" id="PRU00534"/>
    </source>
</evidence>
<evidence type="ECO:0000255" key="3">
    <source>
        <dbReference type="PROSITE-ProRule" id="PRU00535"/>
    </source>
</evidence>
<evidence type="ECO:0000269" key="4">
    <source>
    </source>
</evidence>
<evidence type="ECO:0000269" key="5">
    <source>
    </source>
</evidence>
<evidence type="ECO:0000269" key="6">
    <source>
    </source>
</evidence>
<evidence type="ECO:0000269" key="7">
    <source>
    </source>
</evidence>
<evidence type="ECO:0000269" key="8">
    <source>
    </source>
</evidence>
<evidence type="ECO:0000269" key="9">
    <source>
    </source>
</evidence>
<evidence type="ECO:0000269" key="10">
    <source>
    </source>
</evidence>
<evidence type="ECO:0000269" key="11">
    <source>
    </source>
</evidence>
<evidence type="ECO:0000305" key="12"/>
<reference key="1">
    <citation type="journal article" date="2000" name="Science">
        <title>The genome sequence of Drosophila melanogaster.</title>
        <authorList>
            <person name="Adams M.D."/>
            <person name="Celniker S.E."/>
            <person name="Holt R.A."/>
            <person name="Evans C.A."/>
            <person name="Gocayne J.D."/>
            <person name="Amanatides P.G."/>
            <person name="Scherer S.E."/>
            <person name="Li P.W."/>
            <person name="Hoskins R.A."/>
            <person name="Galle R.F."/>
            <person name="George R.A."/>
            <person name="Lewis S.E."/>
            <person name="Richards S."/>
            <person name="Ashburner M."/>
            <person name="Henderson S.N."/>
            <person name="Sutton G.G."/>
            <person name="Wortman J.R."/>
            <person name="Yandell M.D."/>
            <person name="Zhang Q."/>
            <person name="Chen L.X."/>
            <person name="Brandon R.C."/>
            <person name="Rogers Y.-H.C."/>
            <person name="Blazej R.G."/>
            <person name="Champe M."/>
            <person name="Pfeiffer B.D."/>
            <person name="Wan K.H."/>
            <person name="Doyle C."/>
            <person name="Baxter E.G."/>
            <person name="Helt G."/>
            <person name="Nelson C.R."/>
            <person name="Miklos G.L.G."/>
            <person name="Abril J.F."/>
            <person name="Agbayani A."/>
            <person name="An H.-J."/>
            <person name="Andrews-Pfannkoch C."/>
            <person name="Baldwin D."/>
            <person name="Ballew R.M."/>
            <person name="Basu A."/>
            <person name="Baxendale J."/>
            <person name="Bayraktaroglu L."/>
            <person name="Beasley E.M."/>
            <person name="Beeson K.Y."/>
            <person name="Benos P.V."/>
            <person name="Berman B.P."/>
            <person name="Bhandari D."/>
            <person name="Bolshakov S."/>
            <person name="Borkova D."/>
            <person name="Botchan M.R."/>
            <person name="Bouck J."/>
            <person name="Brokstein P."/>
            <person name="Brottier P."/>
            <person name="Burtis K.C."/>
            <person name="Busam D.A."/>
            <person name="Butler H."/>
            <person name="Cadieu E."/>
            <person name="Center A."/>
            <person name="Chandra I."/>
            <person name="Cherry J.M."/>
            <person name="Cawley S."/>
            <person name="Dahlke C."/>
            <person name="Davenport L.B."/>
            <person name="Davies P."/>
            <person name="de Pablos B."/>
            <person name="Delcher A."/>
            <person name="Deng Z."/>
            <person name="Mays A.D."/>
            <person name="Dew I."/>
            <person name="Dietz S.M."/>
            <person name="Dodson K."/>
            <person name="Doup L.E."/>
            <person name="Downes M."/>
            <person name="Dugan-Rocha S."/>
            <person name="Dunkov B.C."/>
            <person name="Dunn P."/>
            <person name="Durbin K.J."/>
            <person name="Evangelista C.C."/>
            <person name="Ferraz C."/>
            <person name="Ferriera S."/>
            <person name="Fleischmann W."/>
            <person name="Fosler C."/>
            <person name="Gabrielian A.E."/>
            <person name="Garg N.S."/>
            <person name="Gelbart W.M."/>
            <person name="Glasser K."/>
            <person name="Glodek A."/>
            <person name="Gong F."/>
            <person name="Gorrell J.H."/>
            <person name="Gu Z."/>
            <person name="Guan P."/>
            <person name="Harris M."/>
            <person name="Harris N.L."/>
            <person name="Harvey D.A."/>
            <person name="Heiman T.J."/>
            <person name="Hernandez J.R."/>
            <person name="Houck J."/>
            <person name="Hostin D."/>
            <person name="Houston K.A."/>
            <person name="Howland T.J."/>
            <person name="Wei M.-H."/>
            <person name="Ibegwam C."/>
            <person name="Jalali M."/>
            <person name="Kalush F."/>
            <person name="Karpen G.H."/>
            <person name="Ke Z."/>
            <person name="Kennison J.A."/>
            <person name="Ketchum K.A."/>
            <person name="Kimmel B.E."/>
            <person name="Kodira C.D."/>
            <person name="Kraft C.L."/>
            <person name="Kravitz S."/>
            <person name="Kulp D."/>
            <person name="Lai Z."/>
            <person name="Lasko P."/>
            <person name="Lei Y."/>
            <person name="Levitsky A.A."/>
            <person name="Li J.H."/>
            <person name="Li Z."/>
            <person name="Liang Y."/>
            <person name="Lin X."/>
            <person name="Liu X."/>
            <person name="Mattei B."/>
            <person name="McIntosh T.C."/>
            <person name="McLeod M.P."/>
            <person name="McPherson D."/>
            <person name="Merkulov G."/>
            <person name="Milshina N.V."/>
            <person name="Mobarry C."/>
            <person name="Morris J."/>
            <person name="Moshrefi A."/>
            <person name="Mount S.M."/>
            <person name="Moy M."/>
            <person name="Murphy B."/>
            <person name="Murphy L."/>
            <person name="Muzny D.M."/>
            <person name="Nelson D.L."/>
            <person name="Nelson D.R."/>
            <person name="Nelson K.A."/>
            <person name="Nixon K."/>
            <person name="Nusskern D.R."/>
            <person name="Pacleb J.M."/>
            <person name="Palazzolo M."/>
            <person name="Pittman G.S."/>
            <person name="Pan S."/>
            <person name="Pollard J."/>
            <person name="Puri V."/>
            <person name="Reese M.G."/>
            <person name="Reinert K."/>
            <person name="Remington K."/>
            <person name="Saunders R.D.C."/>
            <person name="Scheeler F."/>
            <person name="Shen H."/>
            <person name="Shue B.C."/>
            <person name="Siden-Kiamos I."/>
            <person name="Simpson M."/>
            <person name="Skupski M.P."/>
            <person name="Smith T.J."/>
            <person name="Spier E."/>
            <person name="Spradling A.C."/>
            <person name="Stapleton M."/>
            <person name="Strong R."/>
            <person name="Sun E."/>
            <person name="Svirskas R."/>
            <person name="Tector C."/>
            <person name="Turner R."/>
            <person name="Venter E."/>
            <person name="Wang A.H."/>
            <person name="Wang X."/>
            <person name="Wang Z.-Y."/>
            <person name="Wassarman D.A."/>
            <person name="Weinstock G.M."/>
            <person name="Weissenbach J."/>
            <person name="Williams S.M."/>
            <person name="Woodage T."/>
            <person name="Worley K.C."/>
            <person name="Wu D."/>
            <person name="Yang S."/>
            <person name="Yao Q.A."/>
            <person name="Ye J."/>
            <person name="Yeh R.-F."/>
            <person name="Zaveri J.S."/>
            <person name="Zhan M."/>
            <person name="Zhang G."/>
            <person name="Zhao Q."/>
            <person name="Zheng L."/>
            <person name="Zheng X.H."/>
            <person name="Zhong F.N."/>
            <person name="Zhong W."/>
            <person name="Zhou X."/>
            <person name="Zhu S.C."/>
            <person name="Zhu X."/>
            <person name="Smith H.O."/>
            <person name="Gibbs R.A."/>
            <person name="Myers E.W."/>
            <person name="Rubin G.M."/>
            <person name="Venter J.C."/>
        </authorList>
    </citation>
    <scope>NUCLEOTIDE SEQUENCE [LARGE SCALE GENOMIC DNA]</scope>
    <source>
        <strain>Berkeley</strain>
    </source>
</reference>
<reference key="2">
    <citation type="journal article" date="2002" name="Genome Biol.">
        <title>Annotation of the Drosophila melanogaster euchromatic genome: a systematic review.</title>
        <authorList>
            <person name="Misra S."/>
            <person name="Crosby M.A."/>
            <person name="Mungall C.J."/>
            <person name="Matthews B.B."/>
            <person name="Campbell K.S."/>
            <person name="Hradecky P."/>
            <person name="Huang Y."/>
            <person name="Kaminker J.S."/>
            <person name="Millburn G.H."/>
            <person name="Prochnik S.E."/>
            <person name="Smith C.D."/>
            <person name="Tupy J.L."/>
            <person name="Whitfield E.J."/>
            <person name="Bayraktaroglu L."/>
            <person name="Berman B.P."/>
            <person name="Bettencourt B.R."/>
            <person name="Celniker S.E."/>
            <person name="de Grey A.D.N.J."/>
            <person name="Drysdale R.A."/>
            <person name="Harris N.L."/>
            <person name="Richter J."/>
            <person name="Russo S."/>
            <person name="Schroeder A.J."/>
            <person name="Shu S.Q."/>
            <person name="Stapleton M."/>
            <person name="Yamada C."/>
            <person name="Ashburner M."/>
            <person name="Gelbart W.M."/>
            <person name="Rubin G.M."/>
            <person name="Lewis S.E."/>
        </authorList>
    </citation>
    <scope>GENOME REANNOTATION</scope>
    <source>
        <strain>Berkeley</strain>
    </source>
</reference>
<reference key="3">
    <citation type="journal article" date="2004" name="Mol. Cell. Biol.">
        <title>Drosophila melanogaster MNK/Chk2 and p53 regulate multiple DNA repair and apoptotic pathways following DNA damage.</title>
        <authorList>
            <person name="Brodsky M.H."/>
            <person name="Weinert B.T."/>
            <person name="Tsang G."/>
            <person name="Rong Y.S."/>
            <person name="McGinnis N.M."/>
            <person name="Golic K.G."/>
            <person name="Rio D.C."/>
            <person name="Rubin G.M."/>
        </authorList>
    </citation>
    <scope>NUCLEOTIDE SEQUENCE [MRNA] OF 1569-2767</scope>
</reference>
<reference key="4">
    <citation type="journal article" date="2002" name="Genome Biol.">
        <title>A Drosophila full-length cDNA resource.</title>
        <authorList>
            <person name="Stapleton M."/>
            <person name="Carlson J.W."/>
            <person name="Brokstein P."/>
            <person name="Yu C."/>
            <person name="Champe M."/>
            <person name="George R.A."/>
            <person name="Guarin H."/>
            <person name="Kronmiller B."/>
            <person name="Pacleb J.M."/>
            <person name="Park S."/>
            <person name="Wan K.H."/>
            <person name="Rubin G.M."/>
            <person name="Celniker S.E."/>
        </authorList>
    </citation>
    <scope>NUCLEOTIDE SEQUENCE [LARGE SCALE MRNA] OF 2183-2767</scope>
    <source>
        <strain>Berkeley</strain>
        <tissue>Testis</tissue>
    </source>
</reference>
<reference key="5">
    <citation type="journal article" date="2004" name="Curr. Biol.">
        <title>ATM is required for telomere maintenance and chromosome stability during Drosophila development.</title>
        <authorList>
            <person name="Silva E."/>
            <person name="Tiong S."/>
            <person name="Pedersen M."/>
            <person name="Homola E."/>
            <person name="Royou A."/>
            <person name="Fasulo B."/>
            <person name="Siriaco G."/>
            <person name="Campbell S.D."/>
        </authorList>
    </citation>
    <scope>FUNCTION</scope>
</reference>
<reference key="6">
    <citation type="journal article" date="2004" name="Curr. Biol.">
        <title>Telomere protection without a telomerase; the role of ATM and Mre11 in Drosophila telomere maintenance.</title>
        <authorList>
            <person name="Bi X."/>
            <person name="Wei S.-C.D."/>
            <person name="Rong Y.S."/>
        </authorList>
    </citation>
    <scope>FUNCTION</scope>
</reference>
<reference key="7">
    <citation type="journal article" date="2004" name="Curr. Biol.">
        <title>The Drosophila ATM ortholog, dATM, mediates the response to ionizing radiation and to spontaneous DNA damage during development.</title>
        <authorList>
            <person name="Song Y.-H."/>
            <person name="Mirey G."/>
            <person name="Betson M."/>
            <person name="Haber D.A."/>
            <person name="Settleman J."/>
        </authorList>
    </citation>
    <scope>FUNCTION</scope>
    <scope>DEVELOPMENTAL STAGE</scope>
</reference>
<reference key="8">
    <citation type="journal article" date="2004" name="Genes Dev.">
        <title>Drosophila atm/telomere fusion is required for telomeric localization of HP1 and telomere position effect.</title>
        <authorList>
            <person name="Oikemus S.R."/>
            <person name="McGinnis N."/>
            <person name="Queiroz-Machado J."/>
            <person name="Tukachinsky H."/>
            <person name="Takada S."/>
            <person name="Sunkel C.E."/>
            <person name="Brodsky M.H."/>
        </authorList>
    </citation>
    <scope>IDENTIFICATION</scope>
    <scope>FUNCTION</scope>
    <scope>DISRUPTION PHENOTYPE</scope>
</reference>
<reference key="9">
    <citation type="journal article" date="2005" name="Genetics">
        <title>Drosophila ATM and Mre11 are essential for the G2/M checkpoint induced by low-dose irradiation.</title>
        <authorList>
            <person name="Bi X."/>
            <person name="Gong M."/>
            <person name="Srikanta D."/>
            <person name="Rong Y.S."/>
        </authorList>
    </citation>
    <scope>FUNCTION</scope>
</reference>
<reference key="10">
    <citation type="journal article" date="2005" name="Proc. Natl. Acad. Sci. U.S.A.">
        <title>Drosophila ATM and ATR checkpoint kinases control partially redundant pathways for telomere maintenance.</title>
        <authorList>
            <person name="Bi X."/>
            <person name="Srikanta D."/>
            <person name="Fanti L."/>
            <person name="Pimpinelli S."/>
            <person name="Badugu R."/>
            <person name="Kellum R."/>
            <person name="Rong Y.S."/>
        </authorList>
    </citation>
    <scope>FUNCTION</scope>
</reference>
<reference key="11">
    <citation type="journal article" date="2009" name="J. Cell Sci.">
        <title>A product of the bicistronic Drosophila melanogaster gene CG31241, which also encodes a trimethylguanosine synthase, plays a role in telomere protection.</title>
        <authorList>
            <person name="Komonyi O."/>
            <person name="Schauer T."/>
            <person name="Papai G."/>
            <person name="Deak P."/>
            <person name="Boros I.M."/>
        </authorList>
    </citation>
    <scope>DISRUPTION PHENOTYPE</scope>
</reference>
<reference key="12">
    <citation type="journal article" date="2013" name="Oncogene">
        <title>The tumor suppressor Caliban regulates DNA damage-induced apoptosis through p53-dependent and -independent activity.</title>
        <authorList>
            <person name="Wang Y."/>
            <person name="Wang Z."/>
            <person name="Joshi B.H."/>
            <person name="Puri R.K."/>
            <person name="Stultz B."/>
            <person name="Yuan Q."/>
            <person name="Bai Y."/>
            <person name="Zhou P."/>
            <person name="Yuan Z."/>
            <person name="Hursh D.A."/>
            <person name="Bi X."/>
        </authorList>
    </citation>
    <scope>DISRUPTION PHENOTYPE</scope>
</reference>
<accession>Q5EAK6</accession>
<accession>Q0KI71</accession>
<accession>Q6TKQ1</accession>
<accession>Q8MZG4</accession>
<accession>Q9VFB1</accession>
<comment type="function">
    <text evidence="4 5 6 7 8 9">Serine/threonine-protein kinase which recognizes the substrate consensus sequence [ST]-Q. Required to suppress spontaneous apoptosis of proliferating cells during development, and for their proper differentiation. Required for female fertility. Protects telomeres from fusion, maybe by recruiting or maintaining chromatin-modifying complexes such as Su(var)205/HP1. May activate checkpoint signaling in response to DNA double-stranded breaks induced by low-dose ionizing radiation. May phosphorylate histone H2AV.</text>
</comment>
<comment type="catalytic activity">
    <reaction>
        <text>L-seryl-[protein] + ATP = O-phospho-L-seryl-[protein] + ADP + H(+)</text>
        <dbReference type="Rhea" id="RHEA:17989"/>
        <dbReference type="Rhea" id="RHEA-COMP:9863"/>
        <dbReference type="Rhea" id="RHEA-COMP:11604"/>
        <dbReference type="ChEBI" id="CHEBI:15378"/>
        <dbReference type="ChEBI" id="CHEBI:29999"/>
        <dbReference type="ChEBI" id="CHEBI:30616"/>
        <dbReference type="ChEBI" id="CHEBI:83421"/>
        <dbReference type="ChEBI" id="CHEBI:456216"/>
        <dbReference type="EC" id="2.7.11.1"/>
    </reaction>
</comment>
<comment type="catalytic activity">
    <reaction>
        <text>L-threonyl-[protein] + ATP = O-phospho-L-threonyl-[protein] + ADP + H(+)</text>
        <dbReference type="Rhea" id="RHEA:46608"/>
        <dbReference type="Rhea" id="RHEA-COMP:11060"/>
        <dbReference type="Rhea" id="RHEA-COMP:11605"/>
        <dbReference type="ChEBI" id="CHEBI:15378"/>
        <dbReference type="ChEBI" id="CHEBI:30013"/>
        <dbReference type="ChEBI" id="CHEBI:30616"/>
        <dbReference type="ChEBI" id="CHEBI:61977"/>
        <dbReference type="ChEBI" id="CHEBI:456216"/>
        <dbReference type="EC" id="2.7.11.1"/>
    </reaction>
</comment>
<comment type="subcellular location">
    <subcellularLocation>
        <location evidence="12">Nucleus</location>
    </subcellularLocation>
    <subcellularLocation>
        <location>Chromosome</location>
        <location>Telomere</location>
    </subcellularLocation>
</comment>
<comment type="developmental stage">
    <text evidence="7">Expressed at low levels throughout development and at much higher levels in adult females compared to males.</text>
</comment>
<comment type="disruption phenotype">
    <text evidence="4 10 11">Flies die shortly before or after eclosion with a rough eye phenotype, misshapen wings, and missing or abnormal bristles (PubMed:15256487, PubMed:19240120). Shows increased numbers of spontaneous tumors (PubMed:15256487). Simultaneous knockout of tefu and Clbn/NEMF increases the formation of spontaneous tumors (PubMed:22964637). Frequent anaphase chromosome bridges in larval neuroblasts (PubMed:19240120).</text>
</comment>
<comment type="similarity">
    <text evidence="12">Belongs to the PI3/PI4-kinase family. ATM subfamily.</text>
</comment>
<comment type="sequence caution" evidence="12">
    <conflict type="erroneous initiation">
        <sequence resource="EMBL-CDS" id="AAM29197"/>
    </conflict>
</comment>
<dbReference type="EC" id="2.7.11.1"/>
<dbReference type="EMBL" id="AE014297">
    <property type="protein sequence ID" value="ABI31168.1"/>
    <property type="molecule type" value="Genomic_DNA"/>
</dbReference>
<dbReference type="EMBL" id="AY395750">
    <property type="protein sequence ID" value="AAR89513.1"/>
    <property type="molecule type" value="mRNA"/>
</dbReference>
<dbReference type="EMBL" id="AY113192">
    <property type="protein sequence ID" value="AAM29197.1"/>
    <property type="status" value="ALT_INIT"/>
    <property type="molecule type" value="mRNA"/>
</dbReference>
<dbReference type="EMBL" id="BK004084">
    <property type="protein sequence ID" value="DAA04940.1"/>
    <property type="molecule type" value="mRNA"/>
</dbReference>
<dbReference type="RefSeq" id="NP_001036712.1">
    <property type="nucleotide sequence ID" value="NM_001043247.2"/>
</dbReference>
<dbReference type="SMR" id="Q5EAK6"/>
<dbReference type="BioGRID" id="66903">
    <property type="interactions" value="25"/>
</dbReference>
<dbReference type="FunCoup" id="Q5EAK6">
    <property type="interactions" value="1724"/>
</dbReference>
<dbReference type="IntAct" id="Q5EAK6">
    <property type="interactions" value="2"/>
</dbReference>
<dbReference type="STRING" id="7227.FBpp0110174"/>
<dbReference type="GlyGen" id="Q5EAK6">
    <property type="glycosylation" value="1 site"/>
</dbReference>
<dbReference type="PaxDb" id="7227-FBpp0110174"/>
<dbReference type="EnsemblMetazoa" id="FBtr0110874">
    <property type="protein sequence ID" value="FBpp0110174"/>
    <property type="gene ID" value="FBgn0045035"/>
</dbReference>
<dbReference type="GeneID" id="41839"/>
<dbReference type="KEGG" id="dme:Dmel_CG6535"/>
<dbReference type="AGR" id="FB:FBgn0045035"/>
<dbReference type="CTD" id="41839"/>
<dbReference type="FlyBase" id="FBgn0045035">
    <property type="gene designation" value="tefu"/>
</dbReference>
<dbReference type="VEuPathDB" id="VectorBase:FBgn0045035"/>
<dbReference type="eggNOG" id="KOG0892">
    <property type="taxonomic scope" value="Eukaryota"/>
</dbReference>
<dbReference type="GeneTree" id="ENSGT00940000174195"/>
<dbReference type="HOGENOM" id="CLU_227091_0_0_1"/>
<dbReference type="InParanoid" id="Q5EAK6"/>
<dbReference type="OMA" id="AYCRLDS"/>
<dbReference type="OrthoDB" id="381190at2759"/>
<dbReference type="PhylomeDB" id="Q5EAK6"/>
<dbReference type="Reactome" id="R-DME-2559586">
    <property type="pathway name" value="DNA Damage/Telomere Stress Induced Senescence"/>
</dbReference>
<dbReference type="Reactome" id="R-DME-5693548">
    <property type="pathway name" value="Sensing of DNA Double Strand Breaks"/>
</dbReference>
<dbReference type="Reactome" id="R-DME-5693565">
    <property type="pathway name" value="Recruitment and ATM-mediated phosphorylation of repair and signaling proteins at DNA double strand breaks"/>
</dbReference>
<dbReference type="Reactome" id="R-DME-5693607">
    <property type="pathway name" value="Processing of DNA double-strand break ends"/>
</dbReference>
<dbReference type="Reactome" id="R-DME-6803204">
    <property type="pathway name" value="TP53 Regulates Transcription of Genes Involved in Cytochrome C Release"/>
</dbReference>
<dbReference type="Reactome" id="R-DME-6803207">
    <property type="pathway name" value="TP53 Regulates Transcription of Caspase Activators and Caspases"/>
</dbReference>
<dbReference type="Reactome" id="R-DME-6804756">
    <property type="pathway name" value="Regulation of TP53 Activity through Phosphorylation"/>
</dbReference>
<dbReference type="Reactome" id="R-DME-69473">
    <property type="pathway name" value="G2/M DNA damage checkpoint"/>
</dbReference>
<dbReference type="Reactome" id="R-DME-69541">
    <property type="pathway name" value="Stabilization of p53"/>
</dbReference>
<dbReference type="Reactome" id="R-DME-9664873">
    <property type="pathway name" value="Pexophagy"/>
</dbReference>
<dbReference type="BioGRID-ORCS" id="41839">
    <property type="hits" value="0 hits in 3 CRISPR screens"/>
</dbReference>
<dbReference type="GenomeRNAi" id="41839"/>
<dbReference type="PRO" id="PR:Q5EAK6"/>
<dbReference type="Proteomes" id="UP000000803">
    <property type="component" value="Chromosome 3R"/>
</dbReference>
<dbReference type="Bgee" id="FBgn0045035">
    <property type="expression patterns" value="Expressed in eye disc (Drosophila) and 75 other cell types or tissues"/>
</dbReference>
<dbReference type="ExpressionAtlas" id="Q5EAK6">
    <property type="expression patterns" value="baseline and differential"/>
</dbReference>
<dbReference type="GO" id="GO:0005694">
    <property type="term" value="C:chromosome"/>
    <property type="evidence" value="ECO:0000318"/>
    <property type="project" value="GO_Central"/>
</dbReference>
<dbReference type="GO" id="GO:0000781">
    <property type="term" value="C:chromosome, telomeric region"/>
    <property type="evidence" value="ECO:0007669"/>
    <property type="project" value="UniProtKB-SubCell"/>
</dbReference>
<dbReference type="GO" id="GO:0005737">
    <property type="term" value="C:cytoplasm"/>
    <property type="evidence" value="ECO:0000318"/>
    <property type="project" value="GO_Central"/>
</dbReference>
<dbReference type="GO" id="GO:0005634">
    <property type="term" value="C:nucleus"/>
    <property type="evidence" value="ECO:0000314"/>
    <property type="project" value="FlyBase"/>
</dbReference>
<dbReference type="GO" id="GO:0005524">
    <property type="term" value="F:ATP binding"/>
    <property type="evidence" value="ECO:0007669"/>
    <property type="project" value="UniProtKB-KW"/>
</dbReference>
<dbReference type="GO" id="GO:0035173">
    <property type="term" value="F:histone kinase activity"/>
    <property type="evidence" value="ECO:0000314"/>
    <property type="project" value="FlyBase"/>
</dbReference>
<dbReference type="GO" id="GO:0106310">
    <property type="term" value="F:protein serine kinase activity"/>
    <property type="evidence" value="ECO:0007669"/>
    <property type="project" value="RHEA"/>
</dbReference>
<dbReference type="GO" id="GO:0004674">
    <property type="term" value="F:protein serine/threonine kinase activity"/>
    <property type="evidence" value="ECO:0000318"/>
    <property type="project" value="GO_Central"/>
</dbReference>
<dbReference type="GO" id="GO:0051276">
    <property type="term" value="P:chromosome organization"/>
    <property type="evidence" value="ECO:0000315"/>
    <property type="project" value="FlyBase"/>
</dbReference>
<dbReference type="GO" id="GO:0000077">
    <property type="term" value="P:DNA damage checkpoint signaling"/>
    <property type="evidence" value="ECO:0000318"/>
    <property type="project" value="GO_Central"/>
</dbReference>
<dbReference type="GO" id="GO:0006281">
    <property type="term" value="P:DNA repair"/>
    <property type="evidence" value="ECO:0000315"/>
    <property type="project" value="FlyBase"/>
</dbReference>
<dbReference type="GO" id="GO:0006302">
    <property type="term" value="P:double-strand break repair"/>
    <property type="evidence" value="ECO:0000318"/>
    <property type="project" value="GO_Central"/>
</dbReference>
<dbReference type="GO" id="GO:0008630">
    <property type="term" value="P:intrinsic apoptotic signaling pathway in response to DNA damage"/>
    <property type="evidence" value="ECO:0000318"/>
    <property type="project" value="GO_Central"/>
</dbReference>
<dbReference type="GO" id="GO:0000706">
    <property type="term" value="P:meiotic DNA double-strand break processing"/>
    <property type="evidence" value="ECO:0000314"/>
    <property type="project" value="FlyBase"/>
</dbReference>
<dbReference type="GO" id="GO:0007095">
    <property type="term" value="P:mitotic G2 DNA damage checkpoint signaling"/>
    <property type="evidence" value="ECO:0000315"/>
    <property type="project" value="FlyBase"/>
</dbReference>
<dbReference type="GO" id="GO:2000134">
    <property type="term" value="P:negative regulation of G1/S transition of mitotic cell cycle"/>
    <property type="evidence" value="ECO:0000316"/>
    <property type="project" value="FlyBase"/>
</dbReference>
<dbReference type="GO" id="GO:0034351">
    <property type="term" value="P:negative regulation of glial cell apoptotic process"/>
    <property type="evidence" value="ECO:0000315"/>
    <property type="project" value="FlyBase"/>
</dbReference>
<dbReference type="GO" id="GO:0045824">
    <property type="term" value="P:negative regulation of innate immune response"/>
    <property type="evidence" value="ECO:0000315"/>
    <property type="project" value="FlyBase"/>
</dbReference>
<dbReference type="GO" id="GO:1904262">
    <property type="term" value="P:negative regulation of TORC1 signaling"/>
    <property type="evidence" value="ECO:0000318"/>
    <property type="project" value="GO_Central"/>
</dbReference>
<dbReference type="GO" id="GO:0030717">
    <property type="term" value="P:oocyte karyosome formation"/>
    <property type="evidence" value="ECO:0000314"/>
    <property type="project" value="FlyBase"/>
</dbReference>
<dbReference type="GO" id="GO:0045494">
    <property type="term" value="P:photoreceptor cell maintenance"/>
    <property type="evidence" value="ECO:0000315"/>
    <property type="project" value="FlyBase"/>
</dbReference>
<dbReference type="GO" id="GO:0043687">
    <property type="term" value="P:post-translational protein modification"/>
    <property type="evidence" value="ECO:0000314"/>
    <property type="project" value="FlyBase"/>
</dbReference>
<dbReference type="GO" id="GO:0031509">
    <property type="term" value="P:subtelomeric heterochromatin formation"/>
    <property type="evidence" value="ECO:0000315"/>
    <property type="project" value="FlyBase"/>
</dbReference>
<dbReference type="GO" id="GO:0000723">
    <property type="term" value="P:telomere maintenance"/>
    <property type="evidence" value="ECO:0000315"/>
    <property type="project" value="FlyBase"/>
</dbReference>
<dbReference type="CDD" id="cd05171">
    <property type="entry name" value="PIKKc_ATM"/>
    <property type="match status" value="1"/>
</dbReference>
<dbReference type="FunFam" id="3.30.1010.10:FF:000023">
    <property type="entry name" value="Serine/threonine-protein kinase ATM"/>
    <property type="match status" value="1"/>
</dbReference>
<dbReference type="FunFam" id="1.10.1070.11:FF:000054">
    <property type="entry name" value="serine/threonine-protein kinase ATM"/>
    <property type="match status" value="1"/>
</dbReference>
<dbReference type="Gene3D" id="1.10.1070.11">
    <property type="entry name" value="Phosphatidylinositol 3-/4-kinase, catalytic domain"/>
    <property type="match status" value="1"/>
</dbReference>
<dbReference type="Gene3D" id="3.30.1010.10">
    <property type="entry name" value="Phosphatidylinositol 3-kinase Catalytic Subunit, Chain A, domain 4"/>
    <property type="match status" value="1"/>
</dbReference>
<dbReference type="InterPro" id="IPR038980">
    <property type="entry name" value="ATM_plant"/>
</dbReference>
<dbReference type="InterPro" id="IPR003152">
    <property type="entry name" value="FATC_dom"/>
</dbReference>
<dbReference type="InterPro" id="IPR011009">
    <property type="entry name" value="Kinase-like_dom_sf"/>
</dbReference>
<dbReference type="InterPro" id="IPR000403">
    <property type="entry name" value="PI3/4_kinase_cat_dom"/>
</dbReference>
<dbReference type="InterPro" id="IPR036940">
    <property type="entry name" value="PI3/4_kinase_cat_sf"/>
</dbReference>
<dbReference type="InterPro" id="IPR018936">
    <property type="entry name" value="PI3/4_kinase_CS"/>
</dbReference>
<dbReference type="InterPro" id="IPR014009">
    <property type="entry name" value="PIK_FAT"/>
</dbReference>
<dbReference type="InterPro" id="IPR044107">
    <property type="entry name" value="PIKKc_ATM"/>
</dbReference>
<dbReference type="PANTHER" id="PTHR37079">
    <property type="entry name" value="SERINE/THREONINE-PROTEIN KINASE ATM"/>
    <property type="match status" value="1"/>
</dbReference>
<dbReference type="PANTHER" id="PTHR37079:SF4">
    <property type="entry name" value="SERINE_THREONINE-PROTEIN KINASE ATM"/>
    <property type="match status" value="1"/>
</dbReference>
<dbReference type="Pfam" id="PF02260">
    <property type="entry name" value="FATC"/>
    <property type="match status" value="1"/>
</dbReference>
<dbReference type="Pfam" id="PF00454">
    <property type="entry name" value="PI3_PI4_kinase"/>
    <property type="match status" value="1"/>
</dbReference>
<dbReference type="SMART" id="SM01343">
    <property type="entry name" value="FATC"/>
    <property type="match status" value="1"/>
</dbReference>
<dbReference type="SMART" id="SM00146">
    <property type="entry name" value="PI3Kc"/>
    <property type="match status" value="1"/>
</dbReference>
<dbReference type="SUPFAM" id="SSF56112">
    <property type="entry name" value="Protein kinase-like (PK-like)"/>
    <property type="match status" value="1"/>
</dbReference>
<dbReference type="PROSITE" id="PS51189">
    <property type="entry name" value="FAT"/>
    <property type="match status" value="1"/>
</dbReference>
<dbReference type="PROSITE" id="PS51190">
    <property type="entry name" value="FATC"/>
    <property type="match status" value="1"/>
</dbReference>
<dbReference type="PROSITE" id="PS00915">
    <property type="entry name" value="PI3_4_KINASE_1"/>
    <property type="match status" value="1"/>
</dbReference>
<dbReference type="PROSITE" id="PS00916">
    <property type="entry name" value="PI3_4_KINASE_2"/>
    <property type="match status" value="1"/>
</dbReference>
<dbReference type="PROSITE" id="PS50290">
    <property type="entry name" value="PI3_4_KINASE_3"/>
    <property type="match status" value="1"/>
</dbReference>
<gene>
    <name type="primary">tefu</name>
    <name type="synonym">atm</name>
    <name type="ORF">CG6535</name>
</gene>
<protein>
    <recommendedName>
        <fullName>Serine/threonine-protein kinase ATM</fullName>
        <ecNumber>2.7.11.1</ecNumber>
    </recommendedName>
    <alternativeName>
        <fullName>Telomere fusion protein</fullName>
    </alternativeName>
</protein>